<keyword id="KW-0067">ATP-binding</keyword>
<keyword id="KW-0238">DNA-binding</keyword>
<keyword id="KW-0479">Metal-binding</keyword>
<keyword id="KW-0547">Nucleotide-binding</keyword>
<keyword id="KW-0678">Repressor</keyword>
<keyword id="KW-0804">Transcription</keyword>
<keyword id="KW-0805">Transcription regulation</keyword>
<keyword id="KW-0862">Zinc</keyword>
<keyword id="KW-0863">Zinc-finger</keyword>
<comment type="function">
    <text evidence="1">Negatively regulates transcription of bacterial ribonucleotide reductase nrd genes and operons by binding to NrdR-boxes.</text>
</comment>
<comment type="cofactor">
    <cofactor evidence="1">
        <name>Zn(2+)</name>
        <dbReference type="ChEBI" id="CHEBI:29105"/>
    </cofactor>
    <text evidence="1">Binds 1 zinc ion.</text>
</comment>
<comment type="similarity">
    <text evidence="1">Belongs to the NrdR family.</text>
</comment>
<dbReference type="EMBL" id="CP000255">
    <property type="protein sequence ID" value="ABD22925.1"/>
    <property type="molecule type" value="Genomic_DNA"/>
</dbReference>
<dbReference type="RefSeq" id="WP_000650082.1">
    <property type="nucleotide sequence ID" value="NZ_CP027476.1"/>
</dbReference>
<dbReference type="SMR" id="Q2FG51"/>
<dbReference type="GeneID" id="66839865"/>
<dbReference type="KEGG" id="saa:SAUSA300_1632"/>
<dbReference type="HOGENOM" id="CLU_108412_0_0_9"/>
<dbReference type="OMA" id="YRFTTYE"/>
<dbReference type="Proteomes" id="UP000001939">
    <property type="component" value="Chromosome"/>
</dbReference>
<dbReference type="GO" id="GO:0005524">
    <property type="term" value="F:ATP binding"/>
    <property type="evidence" value="ECO:0007669"/>
    <property type="project" value="UniProtKB-KW"/>
</dbReference>
<dbReference type="GO" id="GO:0003677">
    <property type="term" value="F:DNA binding"/>
    <property type="evidence" value="ECO:0007669"/>
    <property type="project" value="UniProtKB-KW"/>
</dbReference>
<dbReference type="GO" id="GO:0008270">
    <property type="term" value="F:zinc ion binding"/>
    <property type="evidence" value="ECO:0007669"/>
    <property type="project" value="UniProtKB-UniRule"/>
</dbReference>
<dbReference type="GO" id="GO:0045892">
    <property type="term" value="P:negative regulation of DNA-templated transcription"/>
    <property type="evidence" value="ECO:0007669"/>
    <property type="project" value="UniProtKB-UniRule"/>
</dbReference>
<dbReference type="HAMAP" id="MF_00440">
    <property type="entry name" value="NrdR"/>
    <property type="match status" value="1"/>
</dbReference>
<dbReference type="InterPro" id="IPR005144">
    <property type="entry name" value="ATP-cone_dom"/>
</dbReference>
<dbReference type="InterPro" id="IPR055173">
    <property type="entry name" value="NrdR-like_N"/>
</dbReference>
<dbReference type="InterPro" id="IPR003796">
    <property type="entry name" value="RNR_NrdR-like"/>
</dbReference>
<dbReference type="NCBIfam" id="TIGR00244">
    <property type="entry name" value="transcriptional regulator NrdR"/>
    <property type="match status" value="1"/>
</dbReference>
<dbReference type="PANTHER" id="PTHR30455">
    <property type="entry name" value="TRANSCRIPTIONAL REPRESSOR NRDR"/>
    <property type="match status" value="1"/>
</dbReference>
<dbReference type="PANTHER" id="PTHR30455:SF2">
    <property type="entry name" value="TRANSCRIPTIONAL REPRESSOR NRDR"/>
    <property type="match status" value="1"/>
</dbReference>
<dbReference type="Pfam" id="PF03477">
    <property type="entry name" value="ATP-cone"/>
    <property type="match status" value="1"/>
</dbReference>
<dbReference type="Pfam" id="PF22811">
    <property type="entry name" value="Zn_ribbon_NrdR"/>
    <property type="match status" value="1"/>
</dbReference>
<dbReference type="PROSITE" id="PS51161">
    <property type="entry name" value="ATP_CONE"/>
    <property type="match status" value="1"/>
</dbReference>
<reference key="1">
    <citation type="journal article" date="2006" name="Lancet">
        <title>Complete genome sequence of USA300, an epidemic clone of community-acquired meticillin-resistant Staphylococcus aureus.</title>
        <authorList>
            <person name="Diep B.A."/>
            <person name="Gill S.R."/>
            <person name="Chang R.F."/>
            <person name="Phan T.H."/>
            <person name="Chen J.H."/>
            <person name="Davidson M.G."/>
            <person name="Lin F."/>
            <person name="Lin J."/>
            <person name="Carleton H.A."/>
            <person name="Mongodin E.F."/>
            <person name="Sensabaugh G.F."/>
            <person name="Perdreau-Remington F."/>
        </authorList>
    </citation>
    <scope>NUCLEOTIDE SEQUENCE [LARGE SCALE GENOMIC DNA]</scope>
    <source>
        <strain>USA300</strain>
    </source>
</reference>
<sequence length="156" mass="18204">MKCPKCNSTQSKVVDSRHADELNAIRRRRECENCGTRFTTFEHIEVSQLIVVKKDGTREQFSREKILNGLVRSCEKRPVRYQQLEDITNKVEWQLRDEGHTEVSSRDIGEHVMNLLMHVDQVSYVRFASVYKEFKDVDQLLASMQGILSENKRSDA</sequence>
<name>NRDR_STAA3</name>
<organism>
    <name type="scientific">Staphylococcus aureus (strain USA300)</name>
    <dbReference type="NCBI Taxonomy" id="367830"/>
    <lineage>
        <taxon>Bacteria</taxon>
        <taxon>Bacillati</taxon>
        <taxon>Bacillota</taxon>
        <taxon>Bacilli</taxon>
        <taxon>Bacillales</taxon>
        <taxon>Staphylococcaceae</taxon>
        <taxon>Staphylococcus</taxon>
    </lineage>
</organism>
<proteinExistence type="inferred from homology"/>
<protein>
    <recommendedName>
        <fullName evidence="1">Transcriptional repressor NrdR</fullName>
    </recommendedName>
</protein>
<gene>
    <name evidence="1" type="primary">nrdR</name>
    <name type="ordered locus">SAUSA300_1632</name>
</gene>
<evidence type="ECO:0000255" key="1">
    <source>
        <dbReference type="HAMAP-Rule" id="MF_00440"/>
    </source>
</evidence>
<accession>Q2FG51</accession>
<feature type="chain" id="PRO_0000264216" description="Transcriptional repressor NrdR">
    <location>
        <begin position="1"/>
        <end position="156"/>
    </location>
</feature>
<feature type="domain" description="ATP-cone" evidence="1">
    <location>
        <begin position="49"/>
        <end position="139"/>
    </location>
</feature>
<feature type="zinc finger region" evidence="1">
    <location>
        <begin position="3"/>
        <end position="34"/>
    </location>
</feature>